<evidence type="ECO:0000255" key="1"/>
<evidence type="ECO:0000305" key="2"/>
<gene>
    <name type="ordered locus">SCO6666</name>
    <name type="ORF">SC5A7.16c</name>
</gene>
<comment type="subcellular location">
    <subcellularLocation>
        <location evidence="2">Cell membrane</location>
        <topology evidence="2">Multi-pass membrane protein</topology>
    </subcellularLocation>
</comment>
<comment type="similarity">
    <text evidence="2">Belongs to the resistance-nodulation-cell division (RND) (TC 2.A.6) family. MmpL subfamily.</text>
</comment>
<keyword id="KW-1003">Cell membrane</keyword>
<keyword id="KW-0472">Membrane</keyword>
<keyword id="KW-1185">Reference proteome</keyword>
<keyword id="KW-0812">Transmembrane</keyword>
<keyword id="KW-1133">Transmembrane helix</keyword>
<protein>
    <recommendedName>
        <fullName>Putative membrane protein SCO6666</fullName>
    </recommendedName>
</protein>
<reference key="1">
    <citation type="journal article" date="2002" name="Nature">
        <title>Complete genome sequence of the model actinomycete Streptomyces coelicolor A3(2).</title>
        <authorList>
            <person name="Bentley S.D."/>
            <person name="Chater K.F."/>
            <person name="Cerdeno-Tarraga A.-M."/>
            <person name="Challis G.L."/>
            <person name="Thomson N.R."/>
            <person name="James K.D."/>
            <person name="Harris D.E."/>
            <person name="Quail M.A."/>
            <person name="Kieser H."/>
            <person name="Harper D."/>
            <person name="Bateman A."/>
            <person name="Brown S."/>
            <person name="Chandra G."/>
            <person name="Chen C.W."/>
            <person name="Collins M."/>
            <person name="Cronin A."/>
            <person name="Fraser A."/>
            <person name="Goble A."/>
            <person name="Hidalgo J."/>
            <person name="Hornsby T."/>
            <person name="Howarth S."/>
            <person name="Huang C.-H."/>
            <person name="Kieser T."/>
            <person name="Larke L."/>
            <person name="Murphy L.D."/>
            <person name="Oliver K."/>
            <person name="O'Neil S."/>
            <person name="Rabbinowitsch E."/>
            <person name="Rajandream M.A."/>
            <person name="Rutherford K.M."/>
            <person name="Rutter S."/>
            <person name="Seeger K."/>
            <person name="Saunders D."/>
            <person name="Sharp S."/>
            <person name="Squares R."/>
            <person name="Squares S."/>
            <person name="Taylor K."/>
            <person name="Warren T."/>
            <person name="Wietzorrek A."/>
            <person name="Woodward J.R."/>
            <person name="Barrell B.G."/>
            <person name="Parkhill J."/>
            <person name="Hopwood D.A."/>
        </authorList>
    </citation>
    <scope>NUCLEOTIDE SEQUENCE [LARGE SCALE GENOMIC DNA]</scope>
    <source>
        <strain>ATCC BAA-471 / A3(2) / M145</strain>
    </source>
</reference>
<organism>
    <name type="scientific">Streptomyces coelicolor (strain ATCC BAA-471 / A3(2) / M145)</name>
    <dbReference type="NCBI Taxonomy" id="100226"/>
    <lineage>
        <taxon>Bacteria</taxon>
        <taxon>Bacillati</taxon>
        <taxon>Actinomycetota</taxon>
        <taxon>Actinomycetes</taxon>
        <taxon>Kitasatosporales</taxon>
        <taxon>Streptomycetaceae</taxon>
        <taxon>Streptomyces</taxon>
        <taxon>Streptomyces albidoflavus group</taxon>
    </lineage>
</organism>
<sequence>MLSTLARAATRRPLTVMLLWGLFLLLGFGLGTGVFGRLSDDVPDVPGTESQVAAEHLDGLDPAGDSITGVVEAAAVADPAVRAEVRRAVADLREVAGVAEVPDPYATPGTVAEDGRALVVSVTLEGGLDDDAEEAAVDDAADRLHGIDGSAVSGVHVSGGPLLGQQLGERAQEDVKNAELISLPVVLVLLLVVFGGLRAAGLPLLVAVAGIAGAFLALFGFSHVTDISVYAIQVTTMLGLGLAVDYALLMLVRFREERRHIPDVVEAVHRTVAAAGRTVLFSGLTVAVSLAGLLVFPSTFLRSMGLAVAAVVVVDMLAALTLLPALLTRFGGRIPPAKARPEEEGRLFARLARFAARRRVAVLAVAVPALLVVALPVTGMSINLGDARQLPKSTEARQLYDAIEAHFPPGTGVSPVTVVLRPGTDTATADRIGAIAGGTTVRDLPGGTTVLELPAGGAADGPAATELVERVRDLRGDAPVQVTGSAAQLVDFRQMLADRAPWAALTVLTGIFVLLFAFTGSVLLPLRTVATTLLSLGAALGAVVWVFQDGHLAGPIGAEGLGALSLTAPPLIIAIAFGLAMDYELFILARMREARERTGDDREAVVTGLRRSGRVVTCAALLLAVVFGAFMTGGFSPILQIGLGLTLAVLIDATVVRMLLVPATMALLGRHAWWAPKPLRRAHERFGVREEAPGPAPAPPQPAAR</sequence>
<name>MMPLC_STRCO</name>
<accession>O88022</accession>
<feature type="chain" id="PRO_0000103583" description="Putative membrane protein SCO6666">
    <location>
        <begin position="1"/>
        <end position="705"/>
    </location>
</feature>
<feature type="transmembrane region" description="Helical" evidence="1">
    <location>
        <begin position="16"/>
        <end position="36"/>
    </location>
</feature>
<feature type="transmembrane region" description="Helical" evidence="1">
    <location>
        <begin position="144"/>
        <end position="164"/>
    </location>
</feature>
<feature type="transmembrane region" description="Helical" evidence="1">
    <location>
        <begin position="177"/>
        <end position="197"/>
    </location>
</feature>
<feature type="transmembrane region" description="Helical" evidence="1">
    <location>
        <begin position="201"/>
        <end position="221"/>
    </location>
</feature>
<feature type="transmembrane region" description="Helical" evidence="1">
    <location>
        <begin position="232"/>
        <end position="252"/>
    </location>
</feature>
<feature type="transmembrane region" description="Helical" evidence="1">
    <location>
        <begin position="280"/>
        <end position="300"/>
    </location>
</feature>
<feature type="transmembrane region" description="Helical" evidence="1">
    <location>
        <begin position="306"/>
        <end position="326"/>
    </location>
</feature>
<feature type="transmembrane region" description="Helical" evidence="1">
    <location>
        <begin position="360"/>
        <end position="380"/>
    </location>
</feature>
<feature type="transmembrane region" description="Helical" evidence="1">
    <location>
        <begin position="504"/>
        <end position="524"/>
    </location>
</feature>
<feature type="transmembrane region" description="Helical" evidence="1">
    <location>
        <begin position="528"/>
        <end position="548"/>
    </location>
</feature>
<feature type="transmembrane region" description="Helical" evidence="1">
    <location>
        <begin position="561"/>
        <end position="581"/>
    </location>
</feature>
<feature type="transmembrane region" description="Helical" evidence="1">
    <location>
        <begin position="615"/>
        <end position="635"/>
    </location>
</feature>
<feature type="transmembrane region" description="Helical" evidence="1">
    <location>
        <begin position="636"/>
        <end position="656"/>
    </location>
</feature>
<dbReference type="EMBL" id="AL939128">
    <property type="protein sequence ID" value="CAA19945.1"/>
    <property type="molecule type" value="Genomic_DNA"/>
</dbReference>
<dbReference type="PIR" id="T35165">
    <property type="entry name" value="T35165"/>
</dbReference>
<dbReference type="RefSeq" id="NP_630741.1">
    <property type="nucleotide sequence ID" value="NC_003888.3"/>
</dbReference>
<dbReference type="RefSeq" id="WP_011031089.1">
    <property type="nucleotide sequence ID" value="NZ_VNID01000002.1"/>
</dbReference>
<dbReference type="SMR" id="O88022"/>
<dbReference type="STRING" id="100226.gene:17764324"/>
<dbReference type="PaxDb" id="100226-SCO6666"/>
<dbReference type="KEGG" id="sco:SCO6666"/>
<dbReference type="PATRIC" id="fig|100226.15.peg.6772"/>
<dbReference type="eggNOG" id="COG2409">
    <property type="taxonomic scope" value="Bacteria"/>
</dbReference>
<dbReference type="HOGENOM" id="CLU_005108_1_1_11"/>
<dbReference type="InParanoid" id="O88022"/>
<dbReference type="OrthoDB" id="7051771at2"/>
<dbReference type="PhylomeDB" id="O88022"/>
<dbReference type="Proteomes" id="UP000001973">
    <property type="component" value="Chromosome"/>
</dbReference>
<dbReference type="GO" id="GO:0005886">
    <property type="term" value="C:plasma membrane"/>
    <property type="evidence" value="ECO:0007669"/>
    <property type="project" value="UniProtKB-SubCell"/>
</dbReference>
<dbReference type="Gene3D" id="1.20.1640.10">
    <property type="entry name" value="Multidrug efflux transporter AcrB transmembrane domain"/>
    <property type="match status" value="2"/>
</dbReference>
<dbReference type="InterPro" id="IPR004869">
    <property type="entry name" value="MMPL_dom"/>
</dbReference>
<dbReference type="InterPro" id="IPR050545">
    <property type="entry name" value="Mycobact_MmpL"/>
</dbReference>
<dbReference type="InterPro" id="IPR000731">
    <property type="entry name" value="SSD"/>
</dbReference>
<dbReference type="PANTHER" id="PTHR33406">
    <property type="entry name" value="MEMBRANE PROTEIN MJ1562-RELATED"/>
    <property type="match status" value="1"/>
</dbReference>
<dbReference type="PANTHER" id="PTHR33406:SF11">
    <property type="entry name" value="MEMBRANE PROTEIN SCO6666-RELATED"/>
    <property type="match status" value="1"/>
</dbReference>
<dbReference type="Pfam" id="PF03176">
    <property type="entry name" value="MMPL"/>
    <property type="match status" value="2"/>
</dbReference>
<dbReference type="SUPFAM" id="SSF82866">
    <property type="entry name" value="Multidrug efflux transporter AcrB transmembrane domain"/>
    <property type="match status" value="2"/>
</dbReference>
<dbReference type="PROSITE" id="PS50156">
    <property type="entry name" value="SSD"/>
    <property type="match status" value="1"/>
</dbReference>
<proteinExistence type="inferred from homology"/>